<comment type="function">
    <text evidence="1">Catalyzes the transfer of the phosphoribosyl group of 5-phosphorylribose-1-pyrophosphate (PRPP) to anthranilate to yield N-(5'-phosphoribosyl)-anthranilate (PRA).</text>
</comment>
<comment type="catalytic activity">
    <reaction evidence="1">
        <text>N-(5-phospho-beta-D-ribosyl)anthranilate + diphosphate = 5-phospho-alpha-D-ribose 1-diphosphate + anthranilate</text>
        <dbReference type="Rhea" id="RHEA:11768"/>
        <dbReference type="ChEBI" id="CHEBI:16567"/>
        <dbReference type="ChEBI" id="CHEBI:18277"/>
        <dbReference type="ChEBI" id="CHEBI:33019"/>
        <dbReference type="ChEBI" id="CHEBI:58017"/>
        <dbReference type="EC" id="2.4.2.18"/>
    </reaction>
</comment>
<comment type="cofactor">
    <cofactor evidence="1">
        <name>Mg(2+)</name>
        <dbReference type="ChEBI" id="CHEBI:18420"/>
    </cofactor>
    <text evidence="1">Binds 2 magnesium ions per monomer.</text>
</comment>
<comment type="pathway">
    <text evidence="1">Amino-acid biosynthesis; L-tryptophan biosynthesis; L-tryptophan from chorismate: step 2/5.</text>
</comment>
<comment type="subunit">
    <text evidence="1">Homodimer.</text>
</comment>
<comment type="similarity">
    <text evidence="1">Belongs to the anthranilate phosphoribosyltransferase family.</text>
</comment>
<reference key="1">
    <citation type="journal article" date="2009" name="PLoS ONE">
        <title>The complete genome of Teredinibacter turnerae T7901: an intracellular endosymbiont of marine wood-boring bivalves (shipworms).</title>
        <authorList>
            <person name="Yang J.C."/>
            <person name="Madupu R."/>
            <person name="Durkin A.S."/>
            <person name="Ekborg N.A."/>
            <person name="Pedamallu C.S."/>
            <person name="Hostetler J.B."/>
            <person name="Radune D."/>
            <person name="Toms B.S."/>
            <person name="Henrissat B."/>
            <person name="Coutinho P.M."/>
            <person name="Schwarz S."/>
            <person name="Field L."/>
            <person name="Trindade-Silva A.E."/>
            <person name="Soares C.A.G."/>
            <person name="Elshahawi S."/>
            <person name="Hanora A."/>
            <person name="Schmidt E.W."/>
            <person name="Haygood M.G."/>
            <person name="Posfai J."/>
            <person name="Benner J."/>
            <person name="Madinger C."/>
            <person name="Nove J."/>
            <person name="Anton B."/>
            <person name="Chaudhary K."/>
            <person name="Foster J."/>
            <person name="Holman A."/>
            <person name="Kumar S."/>
            <person name="Lessard P.A."/>
            <person name="Luyten Y.A."/>
            <person name="Slatko B."/>
            <person name="Wood N."/>
            <person name="Wu B."/>
            <person name="Teplitski M."/>
            <person name="Mougous J.D."/>
            <person name="Ward N."/>
            <person name="Eisen J.A."/>
            <person name="Badger J.H."/>
            <person name="Distel D.L."/>
        </authorList>
    </citation>
    <scope>NUCLEOTIDE SEQUENCE [LARGE SCALE GENOMIC DNA]</scope>
    <source>
        <strain>ATCC 39867 / T7901</strain>
    </source>
</reference>
<organism>
    <name type="scientific">Teredinibacter turnerae (strain ATCC 39867 / T7901)</name>
    <dbReference type="NCBI Taxonomy" id="377629"/>
    <lineage>
        <taxon>Bacteria</taxon>
        <taxon>Pseudomonadati</taxon>
        <taxon>Pseudomonadota</taxon>
        <taxon>Gammaproteobacteria</taxon>
        <taxon>Cellvibrionales</taxon>
        <taxon>Cellvibrionaceae</taxon>
        <taxon>Teredinibacter</taxon>
    </lineage>
</organism>
<accession>C5BPA3</accession>
<protein>
    <recommendedName>
        <fullName evidence="1">Anthranilate phosphoribosyltransferase</fullName>
        <ecNumber evidence="1">2.4.2.18</ecNumber>
    </recommendedName>
</protein>
<dbReference type="EC" id="2.4.2.18" evidence="1"/>
<dbReference type="EMBL" id="CP001614">
    <property type="protein sequence ID" value="ACR12252.1"/>
    <property type="molecule type" value="Genomic_DNA"/>
</dbReference>
<dbReference type="RefSeq" id="WP_015818364.1">
    <property type="nucleotide sequence ID" value="NC_012997.1"/>
</dbReference>
<dbReference type="SMR" id="C5BPA3"/>
<dbReference type="STRING" id="377629.TERTU_3128"/>
<dbReference type="KEGG" id="ttu:TERTU_3128"/>
<dbReference type="eggNOG" id="COG0547">
    <property type="taxonomic scope" value="Bacteria"/>
</dbReference>
<dbReference type="HOGENOM" id="CLU_034315_2_1_6"/>
<dbReference type="OrthoDB" id="9806430at2"/>
<dbReference type="UniPathway" id="UPA00035">
    <property type="reaction ID" value="UER00041"/>
</dbReference>
<dbReference type="Proteomes" id="UP000009080">
    <property type="component" value="Chromosome"/>
</dbReference>
<dbReference type="GO" id="GO:0005829">
    <property type="term" value="C:cytosol"/>
    <property type="evidence" value="ECO:0007669"/>
    <property type="project" value="TreeGrafter"/>
</dbReference>
<dbReference type="GO" id="GO:0004048">
    <property type="term" value="F:anthranilate phosphoribosyltransferase activity"/>
    <property type="evidence" value="ECO:0007669"/>
    <property type="project" value="UniProtKB-UniRule"/>
</dbReference>
<dbReference type="GO" id="GO:0000287">
    <property type="term" value="F:magnesium ion binding"/>
    <property type="evidence" value="ECO:0007669"/>
    <property type="project" value="UniProtKB-UniRule"/>
</dbReference>
<dbReference type="GO" id="GO:0000162">
    <property type="term" value="P:L-tryptophan biosynthetic process"/>
    <property type="evidence" value="ECO:0007669"/>
    <property type="project" value="UniProtKB-UniRule"/>
</dbReference>
<dbReference type="FunFam" id="1.20.970.10:FF:000006">
    <property type="entry name" value="Anthranilate phosphoribosyltransferase"/>
    <property type="match status" value="1"/>
</dbReference>
<dbReference type="FunFam" id="3.40.1030.10:FF:000002">
    <property type="entry name" value="Anthranilate phosphoribosyltransferase"/>
    <property type="match status" value="1"/>
</dbReference>
<dbReference type="Gene3D" id="3.40.1030.10">
    <property type="entry name" value="Nucleoside phosphorylase/phosphoribosyltransferase catalytic domain"/>
    <property type="match status" value="1"/>
</dbReference>
<dbReference type="Gene3D" id="1.20.970.10">
    <property type="entry name" value="Transferase, Pyrimidine Nucleoside Phosphorylase, Chain C"/>
    <property type="match status" value="1"/>
</dbReference>
<dbReference type="HAMAP" id="MF_00211">
    <property type="entry name" value="TrpD"/>
    <property type="match status" value="1"/>
</dbReference>
<dbReference type="InterPro" id="IPR005940">
    <property type="entry name" value="Anthranilate_Pribosyl_Tfrase"/>
</dbReference>
<dbReference type="InterPro" id="IPR000312">
    <property type="entry name" value="Glycosyl_Trfase_fam3"/>
</dbReference>
<dbReference type="InterPro" id="IPR017459">
    <property type="entry name" value="Glycosyl_Trfase_fam3_N_dom"/>
</dbReference>
<dbReference type="InterPro" id="IPR036320">
    <property type="entry name" value="Glycosyl_Trfase_fam3_N_dom_sf"/>
</dbReference>
<dbReference type="InterPro" id="IPR035902">
    <property type="entry name" value="Nuc_phospho_transferase"/>
</dbReference>
<dbReference type="NCBIfam" id="TIGR01245">
    <property type="entry name" value="trpD"/>
    <property type="match status" value="1"/>
</dbReference>
<dbReference type="PANTHER" id="PTHR43285">
    <property type="entry name" value="ANTHRANILATE PHOSPHORIBOSYLTRANSFERASE"/>
    <property type="match status" value="1"/>
</dbReference>
<dbReference type="PANTHER" id="PTHR43285:SF2">
    <property type="entry name" value="ANTHRANILATE PHOSPHORIBOSYLTRANSFERASE"/>
    <property type="match status" value="1"/>
</dbReference>
<dbReference type="Pfam" id="PF02885">
    <property type="entry name" value="Glycos_trans_3N"/>
    <property type="match status" value="1"/>
</dbReference>
<dbReference type="Pfam" id="PF00591">
    <property type="entry name" value="Glycos_transf_3"/>
    <property type="match status" value="1"/>
</dbReference>
<dbReference type="SUPFAM" id="SSF52418">
    <property type="entry name" value="Nucleoside phosphorylase/phosphoribosyltransferase catalytic domain"/>
    <property type="match status" value="1"/>
</dbReference>
<dbReference type="SUPFAM" id="SSF47648">
    <property type="entry name" value="Nucleoside phosphorylase/phosphoribosyltransferase N-terminal domain"/>
    <property type="match status" value="1"/>
</dbReference>
<feature type="chain" id="PRO_1000204195" description="Anthranilate phosphoribosyltransferase">
    <location>
        <begin position="1"/>
        <end position="341"/>
    </location>
</feature>
<feature type="binding site" evidence="1">
    <location>
        <position position="81"/>
    </location>
    <ligand>
        <name>5-phospho-alpha-D-ribose 1-diphosphate</name>
        <dbReference type="ChEBI" id="CHEBI:58017"/>
    </ligand>
</feature>
<feature type="binding site" evidence="1">
    <location>
        <position position="81"/>
    </location>
    <ligand>
        <name>anthranilate</name>
        <dbReference type="ChEBI" id="CHEBI:16567"/>
        <label>1</label>
    </ligand>
</feature>
<feature type="binding site" evidence="1">
    <location>
        <begin position="84"/>
        <end position="85"/>
    </location>
    <ligand>
        <name>5-phospho-alpha-D-ribose 1-diphosphate</name>
        <dbReference type="ChEBI" id="CHEBI:58017"/>
    </ligand>
</feature>
<feature type="binding site" evidence="1">
    <location>
        <begin position="91"/>
        <end position="94"/>
    </location>
    <ligand>
        <name>5-phospho-alpha-D-ribose 1-diphosphate</name>
        <dbReference type="ChEBI" id="CHEBI:58017"/>
    </ligand>
</feature>
<feature type="binding site" evidence="1">
    <location>
        <position position="93"/>
    </location>
    <ligand>
        <name>Mg(2+)</name>
        <dbReference type="ChEBI" id="CHEBI:18420"/>
        <label>1</label>
    </ligand>
</feature>
<feature type="binding site" evidence="1">
    <location>
        <begin position="109"/>
        <end position="117"/>
    </location>
    <ligand>
        <name>5-phospho-alpha-D-ribose 1-diphosphate</name>
        <dbReference type="ChEBI" id="CHEBI:58017"/>
    </ligand>
</feature>
<feature type="binding site" evidence="1">
    <location>
        <position position="112"/>
    </location>
    <ligand>
        <name>anthranilate</name>
        <dbReference type="ChEBI" id="CHEBI:16567"/>
        <label>1</label>
    </ligand>
</feature>
<feature type="binding site" evidence="1">
    <location>
        <position position="121"/>
    </location>
    <ligand>
        <name>5-phospho-alpha-D-ribose 1-diphosphate</name>
        <dbReference type="ChEBI" id="CHEBI:58017"/>
    </ligand>
</feature>
<feature type="binding site" evidence="1">
    <location>
        <position position="167"/>
    </location>
    <ligand>
        <name>anthranilate</name>
        <dbReference type="ChEBI" id="CHEBI:16567"/>
        <label>2</label>
    </ligand>
</feature>
<feature type="binding site" evidence="1">
    <location>
        <position position="226"/>
    </location>
    <ligand>
        <name>Mg(2+)</name>
        <dbReference type="ChEBI" id="CHEBI:18420"/>
        <label>2</label>
    </ligand>
</feature>
<feature type="binding site" evidence="1">
    <location>
        <position position="227"/>
    </location>
    <ligand>
        <name>Mg(2+)</name>
        <dbReference type="ChEBI" id="CHEBI:18420"/>
        <label>1</label>
    </ligand>
</feature>
<feature type="binding site" evidence="1">
    <location>
        <position position="227"/>
    </location>
    <ligand>
        <name>Mg(2+)</name>
        <dbReference type="ChEBI" id="CHEBI:18420"/>
        <label>2</label>
    </ligand>
</feature>
<proteinExistence type="inferred from homology"/>
<gene>
    <name evidence="1" type="primary">trpD</name>
    <name type="ordered locus">TERTU_3128</name>
</gene>
<evidence type="ECO:0000255" key="1">
    <source>
        <dbReference type="HAMAP-Rule" id="MF_00211"/>
    </source>
</evidence>
<keyword id="KW-0028">Amino-acid biosynthesis</keyword>
<keyword id="KW-0057">Aromatic amino acid biosynthesis</keyword>
<keyword id="KW-0328">Glycosyltransferase</keyword>
<keyword id="KW-0460">Magnesium</keyword>
<keyword id="KW-0479">Metal-binding</keyword>
<keyword id="KW-1185">Reference proteome</keyword>
<keyword id="KW-0808">Transferase</keyword>
<keyword id="KW-0822">Tryptophan biosynthesis</keyword>
<sequence>MNIQQALARVVAGNDLSQDEMVEVMTAVMSGQATPAQIGGFLVALRMKSESLDEITGAAMVMRELATKVEVSANNLVDTCGTGGDGANLFNVSTAAAFVVAAAGGHVAKHGNRSVSSSTGSADVLEAAGVNLSAAPDVVARAIENVGVGFMFAPAHHSAMKHAIGPRKELALRTIFNMLGPMTNPAGVKRQVIGVFTPALCRPMAEVLGRLGSEHVMIVCSDDGLDELSIAAPSHVAELKNGVVTEFKVDPADYGFGYSDLDGLSVTSAEESLGLIRGAFKGDTTELSQKAAAIIAINAGAAIYVAGLAGSMKDGVAMAEDALSSGLAAEKLKELIEFTNV</sequence>
<name>TRPD_TERTT</name>